<reference key="1">
    <citation type="journal article" date="2009" name="J. Bacteriol.">
        <title>Complete genome sequence and comparative genome analysis of enteropathogenic Escherichia coli O127:H6 strain E2348/69.</title>
        <authorList>
            <person name="Iguchi A."/>
            <person name="Thomson N.R."/>
            <person name="Ogura Y."/>
            <person name="Saunders D."/>
            <person name="Ooka T."/>
            <person name="Henderson I.R."/>
            <person name="Harris D."/>
            <person name="Asadulghani M."/>
            <person name="Kurokawa K."/>
            <person name="Dean P."/>
            <person name="Kenny B."/>
            <person name="Quail M.A."/>
            <person name="Thurston S."/>
            <person name="Dougan G."/>
            <person name="Hayashi T."/>
            <person name="Parkhill J."/>
            <person name="Frankel G."/>
        </authorList>
    </citation>
    <scope>NUCLEOTIDE SEQUENCE [LARGE SCALE GENOMIC DNA]</scope>
    <source>
        <strain>E2348/69 / EPEC</strain>
    </source>
</reference>
<feature type="chain" id="PRO_1000148872" description="Thiosulfate sulfurtransferase GlpE">
    <location>
        <begin position="1"/>
        <end position="108"/>
    </location>
</feature>
<feature type="domain" description="Rhodanese" evidence="1">
    <location>
        <begin position="17"/>
        <end position="105"/>
    </location>
</feature>
<feature type="active site" description="Cysteine persulfide intermediate" evidence="1">
    <location>
        <position position="65"/>
    </location>
</feature>
<gene>
    <name evidence="1" type="primary">glpE</name>
    <name type="ordered locus">E2348C_3669</name>
</gene>
<organism>
    <name type="scientific">Escherichia coli O127:H6 (strain E2348/69 / EPEC)</name>
    <dbReference type="NCBI Taxonomy" id="574521"/>
    <lineage>
        <taxon>Bacteria</taxon>
        <taxon>Pseudomonadati</taxon>
        <taxon>Pseudomonadota</taxon>
        <taxon>Gammaproteobacteria</taxon>
        <taxon>Enterobacterales</taxon>
        <taxon>Enterobacteriaceae</taxon>
        <taxon>Escherichia</taxon>
    </lineage>
</organism>
<name>GLPE_ECO27</name>
<protein>
    <recommendedName>
        <fullName evidence="1">Thiosulfate sulfurtransferase GlpE</fullName>
        <ecNumber evidence="1">2.8.1.1</ecNumber>
    </recommendedName>
</protein>
<keyword id="KW-0963">Cytoplasm</keyword>
<keyword id="KW-1185">Reference proteome</keyword>
<keyword id="KW-0808">Transferase</keyword>
<proteinExistence type="inferred from homology"/>
<comment type="function">
    <text evidence="1">Transferase that catalyzes the transfer of sulfur from thiosulfate to thiophilic acceptors such as cyanide or dithiols. May function in a CysM-independent thiosulfate assimilation pathway by catalyzing the conversion of thiosulfate to sulfite, which can then be used for L-cysteine biosynthesis.</text>
</comment>
<comment type="catalytic activity">
    <reaction evidence="1">
        <text>thiosulfate + hydrogen cyanide = thiocyanate + sulfite + 2 H(+)</text>
        <dbReference type="Rhea" id="RHEA:16881"/>
        <dbReference type="ChEBI" id="CHEBI:15378"/>
        <dbReference type="ChEBI" id="CHEBI:17359"/>
        <dbReference type="ChEBI" id="CHEBI:18022"/>
        <dbReference type="ChEBI" id="CHEBI:18407"/>
        <dbReference type="ChEBI" id="CHEBI:33542"/>
        <dbReference type="EC" id="2.8.1.1"/>
    </reaction>
</comment>
<comment type="catalytic activity">
    <reaction evidence="1">
        <text>thiosulfate + [thioredoxin]-dithiol = [thioredoxin]-disulfide + hydrogen sulfide + sulfite + 2 H(+)</text>
        <dbReference type="Rhea" id="RHEA:83859"/>
        <dbReference type="Rhea" id="RHEA-COMP:10698"/>
        <dbReference type="Rhea" id="RHEA-COMP:10700"/>
        <dbReference type="ChEBI" id="CHEBI:15378"/>
        <dbReference type="ChEBI" id="CHEBI:17359"/>
        <dbReference type="ChEBI" id="CHEBI:29919"/>
        <dbReference type="ChEBI" id="CHEBI:29950"/>
        <dbReference type="ChEBI" id="CHEBI:33542"/>
        <dbReference type="ChEBI" id="CHEBI:50058"/>
    </reaction>
</comment>
<comment type="subcellular location">
    <subcellularLocation>
        <location evidence="1">Cytoplasm</location>
    </subcellularLocation>
</comment>
<comment type="similarity">
    <text evidence="1">Belongs to the GlpE family.</text>
</comment>
<evidence type="ECO:0000255" key="1">
    <source>
        <dbReference type="HAMAP-Rule" id="MF_01009"/>
    </source>
</evidence>
<sequence>MDQFECINVADAHQKLQEKEAVLVDIRDPQSFAMGHAAQAFHLTNDTLGAFMRDNDFDTPVMVMCYHGNSSKGAAQYLLQQGYDVVYSIDGGFEAWQRQFPAEVAYGA</sequence>
<accession>B7UKC9</accession>
<dbReference type="EC" id="2.8.1.1" evidence="1"/>
<dbReference type="EMBL" id="FM180568">
    <property type="protein sequence ID" value="CAS11217.1"/>
    <property type="molecule type" value="Genomic_DNA"/>
</dbReference>
<dbReference type="RefSeq" id="WP_000371924.1">
    <property type="nucleotide sequence ID" value="NC_011601.1"/>
</dbReference>
<dbReference type="SMR" id="B7UKC9"/>
<dbReference type="KEGG" id="ecg:E2348C_3669"/>
<dbReference type="HOGENOM" id="CLU_089574_14_0_6"/>
<dbReference type="Proteomes" id="UP000008205">
    <property type="component" value="Chromosome"/>
</dbReference>
<dbReference type="GO" id="GO:0005737">
    <property type="term" value="C:cytoplasm"/>
    <property type="evidence" value="ECO:0007669"/>
    <property type="project" value="UniProtKB-SubCell"/>
</dbReference>
<dbReference type="GO" id="GO:0004792">
    <property type="term" value="F:thiosulfate-cyanide sulfurtransferase activity"/>
    <property type="evidence" value="ECO:0007669"/>
    <property type="project" value="UniProtKB-UniRule"/>
</dbReference>
<dbReference type="GO" id="GO:0006071">
    <property type="term" value="P:glycerol metabolic process"/>
    <property type="evidence" value="ECO:0007669"/>
    <property type="project" value="UniProtKB-UniRule"/>
</dbReference>
<dbReference type="CDD" id="cd01444">
    <property type="entry name" value="GlpE_ST"/>
    <property type="match status" value="1"/>
</dbReference>
<dbReference type="FunFam" id="3.40.250.10:FF:000007">
    <property type="entry name" value="Thiosulfate sulfurtransferase GlpE"/>
    <property type="match status" value="1"/>
</dbReference>
<dbReference type="Gene3D" id="3.40.250.10">
    <property type="entry name" value="Rhodanese-like domain"/>
    <property type="match status" value="1"/>
</dbReference>
<dbReference type="HAMAP" id="MF_01009">
    <property type="entry name" value="Thiosulf_sulfurtr"/>
    <property type="match status" value="1"/>
</dbReference>
<dbReference type="InterPro" id="IPR050229">
    <property type="entry name" value="GlpE_sulfurtransferase"/>
</dbReference>
<dbReference type="InterPro" id="IPR001763">
    <property type="entry name" value="Rhodanese-like_dom"/>
</dbReference>
<dbReference type="InterPro" id="IPR036873">
    <property type="entry name" value="Rhodanese-like_dom_sf"/>
</dbReference>
<dbReference type="InterPro" id="IPR023695">
    <property type="entry name" value="Thiosulf_sulfurTrfase"/>
</dbReference>
<dbReference type="NCBIfam" id="NF001195">
    <property type="entry name" value="PRK00162.1"/>
    <property type="match status" value="1"/>
</dbReference>
<dbReference type="PANTHER" id="PTHR43031">
    <property type="entry name" value="FAD-DEPENDENT OXIDOREDUCTASE"/>
    <property type="match status" value="1"/>
</dbReference>
<dbReference type="PANTHER" id="PTHR43031:SF6">
    <property type="entry name" value="THIOSULFATE SULFURTRANSFERASE GLPE"/>
    <property type="match status" value="1"/>
</dbReference>
<dbReference type="Pfam" id="PF00581">
    <property type="entry name" value="Rhodanese"/>
    <property type="match status" value="1"/>
</dbReference>
<dbReference type="SMART" id="SM00450">
    <property type="entry name" value="RHOD"/>
    <property type="match status" value="1"/>
</dbReference>
<dbReference type="SUPFAM" id="SSF52821">
    <property type="entry name" value="Rhodanese/Cell cycle control phosphatase"/>
    <property type="match status" value="1"/>
</dbReference>
<dbReference type="PROSITE" id="PS50206">
    <property type="entry name" value="RHODANESE_3"/>
    <property type="match status" value="1"/>
</dbReference>